<protein>
    <recommendedName>
        <fullName evidence="1">Guanylate kinase</fullName>
        <ecNumber evidence="1">2.7.4.8</ecNumber>
    </recommendedName>
    <alternativeName>
        <fullName evidence="1">GMP kinase</fullName>
    </alternativeName>
</protein>
<comment type="function">
    <text evidence="1">Essential for recycling GMP and indirectly, cGMP.</text>
</comment>
<comment type="catalytic activity">
    <reaction evidence="1">
        <text>GMP + ATP = GDP + ADP</text>
        <dbReference type="Rhea" id="RHEA:20780"/>
        <dbReference type="ChEBI" id="CHEBI:30616"/>
        <dbReference type="ChEBI" id="CHEBI:58115"/>
        <dbReference type="ChEBI" id="CHEBI:58189"/>
        <dbReference type="ChEBI" id="CHEBI:456216"/>
        <dbReference type="EC" id="2.7.4.8"/>
    </reaction>
</comment>
<comment type="subcellular location">
    <subcellularLocation>
        <location evidence="1">Cytoplasm</location>
    </subcellularLocation>
</comment>
<comment type="similarity">
    <text evidence="1">Belongs to the guanylate kinase family.</text>
</comment>
<accession>Q64PY1</accession>
<keyword id="KW-0067">ATP-binding</keyword>
<keyword id="KW-0963">Cytoplasm</keyword>
<keyword id="KW-0418">Kinase</keyword>
<keyword id="KW-0547">Nucleotide-binding</keyword>
<keyword id="KW-0808">Transferase</keyword>
<dbReference type="EC" id="2.7.4.8" evidence="1"/>
<dbReference type="EMBL" id="AP006841">
    <property type="protein sequence ID" value="BAD50450.1"/>
    <property type="molecule type" value="Genomic_DNA"/>
</dbReference>
<dbReference type="RefSeq" id="WP_005790592.1">
    <property type="nucleotide sequence ID" value="NC_006347.1"/>
</dbReference>
<dbReference type="RefSeq" id="YP_100984.1">
    <property type="nucleotide sequence ID" value="NC_006347.1"/>
</dbReference>
<dbReference type="SMR" id="Q64PY1"/>
<dbReference type="STRING" id="295405.BF3707"/>
<dbReference type="GeneID" id="60367499"/>
<dbReference type="KEGG" id="bfr:BF3707"/>
<dbReference type="PATRIC" id="fig|295405.11.peg.3558"/>
<dbReference type="HOGENOM" id="CLU_001715_1_1_10"/>
<dbReference type="OrthoDB" id="9808150at2"/>
<dbReference type="Proteomes" id="UP000002197">
    <property type="component" value="Chromosome"/>
</dbReference>
<dbReference type="GO" id="GO:0005829">
    <property type="term" value="C:cytosol"/>
    <property type="evidence" value="ECO:0007669"/>
    <property type="project" value="TreeGrafter"/>
</dbReference>
<dbReference type="GO" id="GO:0005524">
    <property type="term" value="F:ATP binding"/>
    <property type="evidence" value="ECO:0007669"/>
    <property type="project" value="UniProtKB-UniRule"/>
</dbReference>
<dbReference type="GO" id="GO:0004385">
    <property type="term" value="F:guanylate kinase activity"/>
    <property type="evidence" value="ECO:0007669"/>
    <property type="project" value="UniProtKB-UniRule"/>
</dbReference>
<dbReference type="CDD" id="cd00071">
    <property type="entry name" value="GMPK"/>
    <property type="match status" value="1"/>
</dbReference>
<dbReference type="FunFam" id="3.30.63.10:FF:000005">
    <property type="entry name" value="Guanylate kinase"/>
    <property type="match status" value="1"/>
</dbReference>
<dbReference type="Gene3D" id="3.30.63.10">
    <property type="entry name" value="Guanylate Kinase phosphate binding domain"/>
    <property type="match status" value="1"/>
</dbReference>
<dbReference type="Gene3D" id="3.40.50.300">
    <property type="entry name" value="P-loop containing nucleotide triphosphate hydrolases"/>
    <property type="match status" value="1"/>
</dbReference>
<dbReference type="HAMAP" id="MF_00328">
    <property type="entry name" value="Guanylate_kinase"/>
    <property type="match status" value="1"/>
</dbReference>
<dbReference type="InterPro" id="IPR008145">
    <property type="entry name" value="GK/Ca_channel_bsu"/>
</dbReference>
<dbReference type="InterPro" id="IPR008144">
    <property type="entry name" value="Guanylate_kin-like_dom"/>
</dbReference>
<dbReference type="InterPro" id="IPR017665">
    <property type="entry name" value="Guanylate_kinase"/>
</dbReference>
<dbReference type="InterPro" id="IPR020590">
    <property type="entry name" value="Guanylate_kinase_CS"/>
</dbReference>
<dbReference type="InterPro" id="IPR027417">
    <property type="entry name" value="P-loop_NTPase"/>
</dbReference>
<dbReference type="NCBIfam" id="TIGR03263">
    <property type="entry name" value="guanyl_kin"/>
    <property type="match status" value="1"/>
</dbReference>
<dbReference type="PANTHER" id="PTHR23117:SF13">
    <property type="entry name" value="GUANYLATE KINASE"/>
    <property type="match status" value="1"/>
</dbReference>
<dbReference type="PANTHER" id="PTHR23117">
    <property type="entry name" value="GUANYLATE KINASE-RELATED"/>
    <property type="match status" value="1"/>
</dbReference>
<dbReference type="Pfam" id="PF00625">
    <property type="entry name" value="Guanylate_kin"/>
    <property type="match status" value="1"/>
</dbReference>
<dbReference type="SMART" id="SM00072">
    <property type="entry name" value="GuKc"/>
    <property type="match status" value="1"/>
</dbReference>
<dbReference type="SUPFAM" id="SSF52540">
    <property type="entry name" value="P-loop containing nucleoside triphosphate hydrolases"/>
    <property type="match status" value="1"/>
</dbReference>
<dbReference type="PROSITE" id="PS00856">
    <property type="entry name" value="GUANYLATE_KINASE_1"/>
    <property type="match status" value="1"/>
</dbReference>
<dbReference type="PROSITE" id="PS50052">
    <property type="entry name" value="GUANYLATE_KINASE_2"/>
    <property type="match status" value="1"/>
</dbReference>
<organism>
    <name type="scientific">Bacteroides fragilis (strain YCH46)</name>
    <dbReference type="NCBI Taxonomy" id="295405"/>
    <lineage>
        <taxon>Bacteria</taxon>
        <taxon>Pseudomonadati</taxon>
        <taxon>Bacteroidota</taxon>
        <taxon>Bacteroidia</taxon>
        <taxon>Bacteroidales</taxon>
        <taxon>Bacteroidaceae</taxon>
        <taxon>Bacteroides</taxon>
    </lineage>
</organism>
<feature type="chain" id="PRO_0000170494" description="Guanylate kinase">
    <location>
        <begin position="1"/>
        <end position="204"/>
    </location>
</feature>
<feature type="domain" description="Guanylate kinase-like" evidence="1">
    <location>
        <begin position="16"/>
        <end position="196"/>
    </location>
</feature>
<feature type="binding site" evidence="1">
    <location>
        <begin position="23"/>
        <end position="30"/>
    </location>
    <ligand>
        <name>ATP</name>
        <dbReference type="ChEBI" id="CHEBI:30616"/>
    </ligand>
</feature>
<gene>
    <name evidence="1" type="primary">gmk</name>
    <name type="ordered locus">BF3707</name>
</gene>
<reference key="1">
    <citation type="journal article" date="2004" name="Proc. Natl. Acad. Sci. U.S.A.">
        <title>Genomic analysis of Bacteroides fragilis reveals extensive DNA inversions regulating cell surface adaptation.</title>
        <authorList>
            <person name="Kuwahara T."/>
            <person name="Yamashita A."/>
            <person name="Hirakawa H."/>
            <person name="Nakayama H."/>
            <person name="Toh H."/>
            <person name="Okada N."/>
            <person name="Kuhara S."/>
            <person name="Hattori M."/>
            <person name="Hayashi T."/>
            <person name="Ohnishi Y."/>
        </authorList>
    </citation>
    <scope>NUCLEOTIDE SEQUENCE [LARGE SCALE GENOMIC DNA]</scope>
    <source>
        <strain>YCH46</strain>
    </source>
</reference>
<proteinExistence type="inferred from homology"/>
<evidence type="ECO:0000255" key="1">
    <source>
        <dbReference type="HAMAP-Rule" id="MF_00328"/>
    </source>
</evidence>
<sequence>MNPTERITTPHKTGEAKVIIFSAPSGSGKSTIINYLLAQKLNLAFSISATSRPPRGNEKHGVEYFFLSPDEFRQRIANNEFLEYEEVYTDRFYGTLKAQVEKQLAAGQNVVFDVDVVGGCNIKKYYGERALSLFIQPPCIDELRRRLIGRGTDTPEVIESRIAKAEYELSFAPKFDKVIINDDLETAKAHALKVIKEFLGIDTE</sequence>
<name>KGUA_BACFR</name>